<reference key="1">
    <citation type="journal article" date="2003" name="Nat. Genet.">
        <title>Comparative analysis of the genome sequences of Bordetella pertussis, Bordetella parapertussis and Bordetella bronchiseptica.</title>
        <authorList>
            <person name="Parkhill J."/>
            <person name="Sebaihia M."/>
            <person name="Preston A."/>
            <person name="Murphy L.D."/>
            <person name="Thomson N.R."/>
            <person name="Harris D.E."/>
            <person name="Holden M.T.G."/>
            <person name="Churcher C.M."/>
            <person name="Bentley S.D."/>
            <person name="Mungall K.L."/>
            <person name="Cerdeno-Tarraga A.-M."/>
            <person name="Temple L."/>
            <person name="James K.D."/>
            <person name="Harris B."/>
            <person name="Quail M.A."/>
            <person name="Achtman M."/>
            <person name="Atkin R."/>
            <person name="Baker S."/>
            <person name="Basham D."/>
            <person name="Bason N."/>
            <person name="Cherevach I."/>
            <person name="Chillingworth T."/>
            <person name="Collins M."/>
            <person name="Cronin A."/>
            <person name="Davis P."/>
            <person name="Doggett J."/>
            <person name="Feltwell T."/>
            <person name="Goble A."/>
            <person name="Hamlin N."/>
            <person name="Hauser H."/>
            <person name="Holroyd S."/>
            <person name="Jagels K."/>
            <person name="Leather S."/>
            <person name="Moule S."/>
            <person name="Norberczak H."/>
            <person name="O'Neil S."/>
            <person name="Ormond D."/>
            <person name="Price C."/>
            <person name="Rabbinowitsch E."/>
            <person name="Rutter S."/>
            <person name="Sanders M."/>
            <person name="Saunders D."/>
            <person name="Seeger K."/>
            <person name="Sharp S."/>
            <person name="Simmonds M."/>
            <person name="Skelton J."/>
            <person name="Squares R."/>
            <person name="Squares S."/>
            <person name="Stevens K."/>
            <person name="Unwin L."/>
            <person name="Whitehead S."/>
            <person name="Barrell B.G."/>
            <person name="Maskell D.J."/>
        </authorList>
    </citation>
    <scope>NUCLEOTIDE SEQUENCE [LARGE SCALE GENOMIC DNA]</scope>
    <source>
        <strain>Tohama I / ATCC BAA-589 / NCTC 13251</strain>
    </source>
</reference>
<dbReference type="EC" id="6.1.1.21" evidence="1"/>
<dbReference type="EMBL" id="BX640417">
    <property type="protein sequence ID" value="CAE42476.1"/>
    <property type="status" value="ALT_INIT"/>
    <property type="molecule type" value="Genomic_DNA"/>
</dbReference>
<dbReference type="RefSeq" id="NP_880846.1">
    <property type="nucleotide sequence ID" value="NC_002929.2"/>
</dbReference>
<dbReference type="SMR" id="Q7VWL1"/>
<dbReference type="STRING" id="257313.BP2198"/>
<dbReference type="PaxDb" id="257313-BP2198"/>
<dbReference type="KEGG" id="bpe:BP2198"/>
<dbReference type="PATRIC" id="fig|257313.5.peg.2372"/>
<dbReference type="eggNOG" id="COG0124">
    <property type="taxonomic scope" value="Bacteria"/>
</dbReference>
<dbReference type="HOGENOM" id="CLU_025113_1_1_4"/>
<dbReference type="Proteomes" id="UP000002676">
    <property type="component" value="Chromosome"/>
</dbReference>
<dbReference type="GO" id="GO:0005737">
    <property type="term" value="C:cytoplasm"/>
    <property type="evidence" value="ECO:0007669"/>
    <property type="project" value="UniProtKB-SubCell"/>
</dbReference>
<dbReference type="GO" id="GO:0005524">
    <property type="term" value="F:ATP binding"/>
    <property type="evidence" value="ECO:0007669"/>
    <property type="project" value="UniProtKB-UniRule"/>
</dbReference>
<dbReference type="GO" id="GO:0004821">
    <property type="term" value="F:histidine-tRNA ligase activity"/>
    <property type="evidence" value="ECO:0007669"/>
    <property type="project" value="UniProtKB-UniRule"/>
</dbReference>
<dbReference type="GO" id="GO:0006427">
    <property type="term" value="P:histidyl-tRNA aminoacylation"/>
    <property type="evidence" value="ECO:0007669"/>
    <property type="project" value="UniProtKB-UniRule"/>
</dbReference>
<dbReference type="CDD" id="cd00773">
    <property type="entry name" value="HisRS-like_core"/>
    <property type="match status" value="1"/>
</dbReference>
<dbReference type="CDD" id="cd00859">
    <property type="entry name" value="HisRS_anticodon"/>
    <property type="match status" value="1"/>
</dbReference>
<dbReference type="FunFam" id="3.30.930.10:FF:000005">
    <property type="entry name" value="Histidine--tRNA ligase"/>
    <property type="match status" value="1"/>
</dbReference>
<dbReference type="Gene3D" id="3.40.50.800">
    <property type="entry name" value="Anticodon-binding domain"/>
    <property type="match status" value="1"/>
</dbReference>
<dbReference type="Gene3D" id="3.30.930.10">
    <property type="entry name" value="Bira Bifunctional Protein, Domain 2"/>
    <property type="match status" value="1"/>
</dbReference>
<dbReference type="HAMAP" id="MF_00127">
    <property type="entry name" value="His_tRNA_synth"/>
    <property type="match status" value="1"/>
</dbReference>
<dbReference type="InterPro" id="IPR006195">
    <property type="entry name" value="aa-tRNA-synth_II"/>
</dbReference>
<dbReference type="InterPro" id="IPR045864">
    <property type="entry name" value="aa-tRNA-synth_II/BPL/LPL"/>
</dbReference>
<dbReference type="InterPro" id="IPR004154">
    <property type="entry name" value="Anticodon-bd"/>
</dbReference>
<dbReference type="InterPro" id="IPR036621">
    <property type="entry name" value="Anticodon-bd_dom_sf"/>
</dbReference>
<dbReference type="InterPro" id="IPR015807">
    <property type="entry name" value="His-tRNA-ligase"/>
</dbReference>
<dbReference type="InterPro" id="IPR041715">
    <property type="entry name" value="HisRS-like_core"/>
</dbReference>
<dbReference type="InterPro" id="IPR004516">
    <property type="entry name" value="HisRS/HisZ"/>
</dbReference>
<dbReference type="InterPro" id="IPR033656">
    <property type="entry name" value="HisRS_anticodon"/>
</dbReference>
<dbReference type="NCBIfam" id="TIGR00442">
    <property type="entry name" value="hisS"/>
    <property type="match status" value="1"/>
</dbReference>
<dbReference type="PANTHER" id="PTHR43707:SF1">
    <property type="entry name" value="HISTIDINE--TRNA LIGASE, MITOCHONDRIAL-RELATED"/>
    <property type="match status" value="1"/>
</dbReference>
<dbReference type="PANTHER" id="PTHR43707">
    <property type="entry name" value="HISTIDYL-TRNA SYNTHETASE"/>
    <property type="match status" value="1"/>
</dbReference>
<dbReference type="Pfam" id="PF03129">
    <property type="entry name" value="HGTP_anticodon"/>
    <property type="match status" value="1"/>
</dbReference>
<dbReference type="Pfam" id="PF13393">
    <property type="entry name" value="tRNA-synt_His"/>
    <property type="match status" value="1"/>
</dbReference>
<dbReference type="PIRSF" id="PIRSF001549">
    <property type="entry name" value="His-tRNA_synth"/>
    <property type="match status" value="1"/>
</dbReference>
<dbReference type="SUPFAM" id="SSF52954">
    <property type="entry name" value="Class II aaRS ABD-related"/>
    <property type="match status" value="1"/>
</dbReference>
<dbReference type="SUPFAM" id="SSF55681">
    <property type="entry name" value="Class II aaRS and biotin synthetases"/>
    <property type="match status" value="1"/>
</dbReference>
<dbReference type="PROSITE" id="PS50862">
    <property type="entry name" value="AA_TRNA_LIGASE_II"/>
    <property type="match status" value="1"/>
</dbReference>
<feature type="chain" id="PRO_0000136119" description="Histidine--tRNA ligase">
    <location>
        <begin position="1"/>
        <end position="428"/>
    </location>
</feature>
<keyword id="KW-0030">Aminoacyl-tRNA synthetase</keyword>
<keyword id="KW-0067">ATP-binding</keyword>
<keyword id="KW-0963">Cytoplasm</keyword>
<keyword id="KW-0436">Ligase</keyword>
<keyword id="KW-0547">Nucleotide-binding</keyword>
<keyword id="KW-0648">Protein biosynthesis</keyword>
<keyword id="KW-1185">Reference proteome</keyword>
<name>SYH_BORPE</name>
<protein>
    <recommendedName>
        <fullName evidence="1">Histidine--tRNA ligase</fullName>
        <ecNumber evidence="1">6.1.1.21</ecNumber>
    </recommendedName>
    <alternativeName>
        <fullName evidence="1">Histidyl-tRNA synthetase</fullName>
        <shortName evidence="1">HisRS</shortName>
    </alternativeName>
</protein>
<proteinExistence type="inferred from homology"/>
<organism>
    <name type="scientific">Bordetella pertussis (strain Tohama I / ATCC BAA-589 / NCTC 13251)</name>
    <dbReference type="NCBI Taxonomy" id="257313"/>
    <lineage>
        <taxon>Bacteria</taxon>
        <taxon>Pseudomonadati</taxon>
        <taxon>Pseudomonadota</taxon>
        <taxon>Betaproteobacteria</taxon>
        <taxon>Burkholderiales</taxon>
        <taxon>Alcaligenaceae</taxon>
        <taxon>Bordetella</taxon>
    </lineage>
</organism>
<evidence type="ECO:0000255" key="1">
    <source>
        <dbReference type="HAMAP-Rule" id="MF_00127"/>
    </source>
</evidence>
<evidence type="ECO:0000305" key="2"/>
<comment type="catalytic activity">
    <reaction evidence="1">
        <text>tRNA(His) + L-histidine + ATP = L-histidyl-tRNA(His) + AMP + diphosphate + H(+)</text>
        <dbReference type="Rhea" id="RHEA:17313"/>
        <dbReference type="Rhea" id="RHEA-COMP:9665"/>
        <dbReference type="Rhea" id="RHEA-COMP:9689"/>
        <dbReference type="ChEBI" id="CHEBI:15378"/>
        <dbReference type="ChEBI" id="CHEBI:30616"/>
        <dbReference type="ChEBI" id="CHEBI:33019"/>
        <dbReference type="ChEBI" id="CHEBI:57595"/>
        <dbReference type="ChEBI" id="CHEBI:78442"/>
        <dbReference type="ChEBI" id="CHEBI:78527"/>
        <dbReference type="ChEBI" id="CHEBI:456215"/>
        <dbReference type="EC" id="6.1.1.21"/>
    </reaction>
</comment>
<comment type="subunit">
    <text evidence="1">Homodimer.</text>
</comment>
<comment type="subcellular location">
    <subcellularLocation>
        <location evidence="1">Cytoplasm</location>
    </subcellularLocation>
</comment>
<comment type="similarity">
    <text evidence="1">Belongs to the class-II aminoacyl-tRNA synthetase family.</text>
</comment>
<comment type="sequence caution" evidence="2">
    <conflict type="erroneous initiation">
        <sequence resource="EMBL-CDS" id="CAE42476"/>
    </conflict>
</comment>
<sequence length="428" mass="47746">MTQVFQKVSAIRGMNDVLPGPSARWEKFEEIVRGWLRSYGYRNVRTPVLEHTRLFARGIGEVTDIVEKEMYTFTDALNGDSLTMRPEMTAGIVRASIEHNMLYDRPHRVYAIGPVFRHERPQRGRYRQFHQIDVEALGFAGPDVDAEMIVMLARLWKLLGLQDVRLELNSLGQPAERAAHRAALIEHLERHQDVLDEDGRRRMYSNPLRVLDTKNPAMQEMADSAPRLFDFLGEASRSHFDGLCQRLADAGIEYRLNPRLVRGLDYYNLTVFEWVTDRLGAQGTVCGGGRYDGLVELLGGKPTPAVGFAIGMERLLDLWEQSVEIEQPAECEVYIVHQGEEGQRLAARVGEQLRDAGLDVIVHAGAAGFKAQFKRADASGARIAVILGGDEVASRTASIKHLRGPVGADAAQQQVPLAQLADVLKSKG</sequence>
<gene>
    <name evidence="1" type="primary">hisS</name>
    <name type="ordered locus">BP2198</name>
</gene>
<accession>Q7VWL1</accession>